<comment type="function">
    <text>Core component of nucleosome. Nucleosomes wrap and compact DNA into chromatin, limiting DNA accessibility to the cellular machineries which require DNA as a template. Histones thereby play a central role in transcription regulation, DNA repair, DNA replication and chromosomal stability. DNA accessibility is regulated via a complex set of post-translational modifications of histones, also called histone code, and nucleosome remodeling.</text>
</comment>
<comment type="subunit">
    <text>The nucleosome is a histone octamer containing two molecules each of H2A, H2B, H3 and H4 assembled in one H3-H4 heterotetramer and two H2A-H2B heterodimers. The octamer wraps approximately 147 bp of DNA.</text>
</comment>
<comment type="subcellular location">
    <subcellularLocation>
        <location>Nucleus</location>
    </subcellularLocation>
    <subcellularLocation>
        <location>Chromosome</location>
    </subcellularLocation>
</comment>
<comment type="developmental stage">
    <text evidence="4">Expressed only during spermatogenesis.</text>
</comment>
<comment type="domain">
    <text>Contains 3 SPKK motifs which may interact with the minor groove of A/T-rich DNA sites. Phosphorylation of this motif may regulate DNA binding. This motif is reiterated in both termini of histone H1 and in the C-terminus of plant H2A, but its presence in the N-terminus seems to be unique to sea urchin histones H2B.</text>
</comment>
<comment type="PTM">
    <text evidence="1">Monoubiquitination of Lys-132 gives a specific tag for epigenetic transcriptional activation and is also prerequisite for histone H3 'Lys-4' and 'Lys-79' methylation.</text>
</comment>
<comment type="PTM">
    <text evidence="3">Phosphorylated on SPKK motifs 2 and 3; which may regulate DNA binding. Dephosphorylated during maturation of spermatids to mature sperm and rephosphorylated at fertilization.</text>
</comment>
<comment type="PTM">
    <text evidence="1">GlcNAcylation at Ser-124 promotes monoubiquitination of Lys-132. It fluctuates in response to extracellular glucose, and associates with transcribed genes (By similarity).</text>
</comment>
<comment type="similarity">
    <text evidence="6">Belongs to the histone H2B family.</text>
</comment>
<protein>
    <recommendedName>
        <fullName>Histone H2B.1, sperm</fullName>
    </recommendedName>
</protein>
<evidence type="ECO:0000250" key="1"/>
<evidence type="ECO:0000256" key="2">
    <source>
        <dbReference type="SAM" id="MobiDB-lite"/>
    </source>
</evidence>
<evidence type="ECO:0000269" key="3">
    <source>
    </source>
</evidence>
<evidence type="ECO:0000269" key="4">
    <source>
    </source>
</evidence>
<evidence type="ECO:0000269" key="5">
    <source>
    </source>
</evidence>
<evidence type="ECO:0000305" key="6"/>
<keyword id="KW-0158">Chromosome</keyword>
<keyword id="KW-0903">Direct protein sequencing</keyword>
<keyword id="KW-0238">DNA-binding</keyword>
<keyword id="KW-0325">Glycoprotein</keyword>
<keyword id="KW-1017">Isopeptide bond</keyword>
<keyword id="KW-0544">Nucleosome core</keyword>
<keyword id="KW-0539">Nucleus</keyword>
<keyword id="KW-0597">Phosphoprotein</keyword>
<keyword id="KW-0832">Ubl conjugation</keyword>
<proteinExistence type="evidence at protein level"/>
<reference key="1">
    <citation type="journal article" date="1985" name="Proc. Natl. Acad. Sci. U.S.A.">
        <title>Synthesis of sperm and late histone cDNAs of the sea urchin with a primer complementary to the conserved 3' terminal palindrome: evidence for tissue-specific and more general histone gene variants.</title>
        <authorList>
            <person name="Busslinger M."/>
            <person name="Barberis A."/>
        </authorList>
    </citation>
    <scope>NUCLEOTIDE SEQUENCE [MRNA]</scope>
    <scope>DEVELOPMENTAL STAGE</scope>
    <source>
        <tissue>Testis</tissue>
    </source>
</reference>
<reference key="2">
    <citation type="journal article" date="1978" name="Biochim. Biophys. Acta">
        <title>The partial amino acid sequences of the two H2B histones from sperm of the sea urchin Psammechinus miliaris.</title>
        <authorList>
            <person name="Strickland M."/>
            <person name="Strickland W.N."/>
            <person name="Brandt W.F."/>
            <person name="von Holt C."/>
        </authorList>
    </citation>
    <scope>PROTEIN SEQUENCE OF 2-51</scope>
</reference>
<reference key="3">
    <citation type="journal article" date="1990" name="EMBO J.">
        <title>Phosphorylation at clustered -Ser-Pro-X-Lys/Arg- motifs in sperm-specific histones H1 and H2B.</title>
        <authorList>
            <person name="Hill C.S."/>
            <person name="Packman L.C."/>
            <person name="Thomas J.O."/>
        </authorList>
    </citation>
    <scope>PROTEIN SEQUENCE OF 11-26</scope>
    <scope>PHOSPHORYLATION AT SER-11 AND SER-16</scope>
</reference>
<name>H2BS1_PSAMI</name>
<sequence>MPSQKSPTKRSPTKRSPQKGGKGAKRGGKAGKRRRGVAVKRRRRRRESYGIYIYKVLKQVHPDTGISSRAMSVMNSFVNDVFERIASEAGRLTTYNRRNTVSSREVQTAVRLLLPGELAKHAVSEGTKAVTKYTTSR</sequence>
<dbReference type="EMBL" id="M11086">
    <property type="protein sequence ID" value="AAA30020.1"/>
    <property type="molecule type" value="mRNA"/>
</dbReference>
<dbReference type="SMR" id="Q27749"/>
<dbReference type="iPTMnet" id="Q27749"/>
<dbReference type="GO" id="GO:0000786">
    <property type="term" value="C:nucleosome"/>
    <property type="evidence" value="ECO:0007669"/>
    <property type="project" value="UniProtKB-KW"/>
</dbReference>
<dbReference type="GO" id="GO:0005634">
    <property type="term" value="C:nucleus"/>
    <property type="evidence" value="ECO:0007669"/>
    <property type="project" value="UniProtKB-SubCell"/>
</dbReference>
<dbReference type="GO" id="GO:0003677">
    <property type="term" value="F:DNA binding"/>
    <property type="evidence" value="ECO:0007669"/>
    <property type="project" value="UniProtKB-KW"/>
</dbReference>
<dbReference type="GO" id="GO:0046982">
    <property type="term" value="F:protein heterodimerization activity"/>
    <property type="evidence" value="ECO:0007669"/>
    <property type="project" value="InterPro"/>
</dbReference>
<dbReference type="GO" id="GO:0030527">
    <property type="term" value="F:structural constituent of chromatin"/>
    <property type="evidence" value="ECO:0007669"/>
    <property type="project" value="InterPro"/>
</dbReference>
<dbReference type="CDD" id="cd22910">
    <property type="entry name" value="HFD_H2B"/>
    <property type="match status" value="1"/>
</dbReference>
<dbReference type="FunFam" id="1.10.20.10:FF:000016">
    <property type="entry name" value="Histone H2B"/>
    <property type="match status" value="1"/>
</dbReference>
<dbReference type="Gene3D" id="1.10.20.10">
    <property type="entry name" value="Histone, subunit A"/>
    <property type="match status" value="1"/>
</dbReference>
<dbReference type="InterPro" id="IPR009072">
    <property type="entry name" value="Histone-fold"/>
</dbReference>
<dbReference type="InterPro" id="IPR007125">
    <property type="entry name" value="Histone_H2A/H2B/H3"/>
</dbReference>
<dbReference type="InterPro" id="IPR000558">
    <property type="entry name" value="Histone_H2B"/>
</dbReference>
<dbReference type="InterPro" id="IPR055333">
    <property type="entry name" value="HISTONE_H2B_site"/>
</dbReference>
<dbReference type="PANTHER" id="PTHR23428">
    <property type="entry name" value="HISTONE H2B"/>
    <property type="match status" value="1"/>
</dbReference>
<dbReference type="Pfam" id="PF00125">
    <property type="entry name" value="Histone"/>
    <property type="match status" value="1"/>
</dbReference>
<dbReference type="PRINTS" id="PR00621">
    <property type="entry name" value="HISTONEH2B"/>
</dbReference>
<dbReference type="SMART" id="SM00427">
    <property type="entry name" value="H2B"/>
    <property type="match status" value="1"/>
</dbReference>
<dbReference type="SUPFAM" id="SSF47113">
    <property type="entry name" value="Histone-fold"/>
    <property type="match status" value="1"/>
</dbReference>
<dbReference type="PROSITE" id="PS00357">
    <property type="entry name" value="HISTONE_H2B"/>
    <property type="match status" value="1"/>
</dbReference>
<organism>
    <name type="scientific">Psammechinus miliaris</name>
    <name type="common">Green sea urchin</name>
    <name type="synonym">Echinus miliaris</name>
    <dbReference type="NCBI Taxonomy" id="7660"/>
    <lineage>
        <taxon>Eukaryota</taxon>
        <taxon>Metazoa</taxon>
        <taxon>Echinodermata</taxon>
        <taxon>Eleutherozoa</taxon>
        <taxon>Echinozoa</taxon>
        <taxon>Echinoidea</taxon>
        <taxon>Euechinoidea</taxon>
        <taxon>Echinacea</taxon>
        <taxon>Camarodonta</taxon>
        <taxon>Echinidea</taxon>
        <taxon>Parechinidae</taxon>
        <taxon>Psammechinus</taxon>
    </lineage>
</organism>
<feature type="initiator methionine" description="Removed" evidence="5">
    <location>
        <position position="1"/>
    </location>
</feature>
<feature type="chain" id="PRO_0000239650" description="Histone H2B.1, sperm">
    <location>
        <begin position="2"/>
        <end position="137"/>
    </location>
</feature>
<feature type="region of interest" description="Disordered" evidence="2">
    <location>
        <begin position="1"/>
        <end position="43"/>
    </location>
</feature>
<feature type="short sequence motif" description="SPKK motif 1">
    <location>
        <begin position="6"/>
        <end position="9"/>
    </location>
</feature>
<feature type="short sequence motif" description="SPKK motif 2">
    <location>
        <begin position="11"/>
        <end position="14"/>
    </location>
</feature>
<feature type="short sequence motif" description="SPKK motif 3">
    <location>
        <begin position="16"/>
        <end position="19"/>
    </location>
</feature>
<feature type="compositionally biased region" description="Basic residues" evidence="2">
    <location>
        <begin position="7"/>
        <end position="43"/>
    </location>
</feature>
<feature type="modified residue" description="Phosphoserine" evidence="3">
    <location>
        <position position="11"/>
    </location>
</feature>
<feature type="modified residue" description="Phosphoserine" evidence="3">
    <location>
        <position position="16"/>
    </location>
</feature>
<feature type="glycosylation site" description="O-linked (GlcNAc) serine" evidence="1">
    <location>
        <position position="124"/>
    </location>
</feature>
<feature type="cross-link" description="Glycyl lysine isopeptide (Lys-Gly) (interchain with G-Cter in ubiquitin)" evidence="1">
    <location>
        <position position="132"/>
    </location>
</feature>
<accession>Q27749</accession>